<feature type="chain" id="PRO_1000204019" description="NH(3)-dependent NAD(+) synthetase">
    <location>
        <begin position="1"/>
        <end position="274"/>
    </location>
</feature>
<feature type="binding site" evidence="1">
    <location>
        <begin position="46"/>
        <end position="53"/>
    </location>
    <ligand>
        <name>ATP</name>
        <dbReference type="ChEBI" id="CHEBI:30616"/>
    </ligand>
</feature>
<feature type="binding site" evidence="1">
    <location>
        <position position="52"/>
    </location>
    <ligand>
        <name>Mg(2+)</name>
        <dbReference type="ChEBI" id="CHEBI:18420"/>
    </ligand>
</feature>
<feature type="binding site" evidence="1">
    <location>
        <position position="140"/>
    </location>
    <ligand>
        <name>deamido-NAD(+)</name>
        <dbReference type="ChEBI" id="CHEBI:58437"/>
    </ligand>
</feature>
<feature type="binding site" evidence="1">
    <location>
        <position position="160"/>
    </location>
    <ligand>
        <name>ATP</name>
        <dbReference type="ChEBI" id="CHEBI:30616"/>
    </ligand>
</feature>
<feature type="binding site" evidence="1">
    <location>
        <position position="165"/>
    </location>
    <ligand>
        <name>Mg(2+)</name>
        <dbReference type="ChEBI" id="CHEBI:18420"/>
    </ligand>
</feature>
<feature type="binding site" evidence="1">
    <location>
        <position position="173"/>
    </location>
    <ligand>
        <name>deamido-NAD(+)</name>
        <dbReference type="ChEBI" id="CHEBI:58437"/>
    </ligand>
</feature>
<feature type="binding site" evidence="1">
    <location>
        <position position="180"/>
    </location>
    <ligand>
        <name>deamido-NAD(+)</name>
        <dbReference type="ChEBI" id="CHEBI:58437"/>
    </ligand>
</feature>
<feature type="binding site" evidence="1">
    <location>
        <position position="189"/>
    </location>
    <ligand>
        <name>ATP</name>
        <dbReference type="ChEBI" id="CHEBI:30616"/>
    </ligand>
</feature>
<feature type="binding site" evidence="1">
    <location>
        <position position="211"/>
    </location>
    <ligand>
        <name>ATP</name>
        <dbReference type="ChEBI" id="CHEBI:30616"/>
    </ligand>
</feature>
<feature type="binding site" evidence="1">
    <location>
        <begin position="260"/>
        <end position="261"/>
    </location>
    <ligand>
        <name>deamido-NAD(+)</name>
        <dbReference type="ChEBI" id="CHEBI:58437"/>
    </ligand>
</feature>
<dbReference type="EC" id="6.3.1.5" evidence="1"/>
<dbReference type="EMBL" id="FM242711">
    <property type="protein sequence ID" value="CAS04872.1"/>
    <property type="molecule type" value="Genomic_DNA"/>
</dbReference>
<dbReference type="RefSeq" id="WP_003727000.1">
    <property type="nucleotide sequence ID" value="NC_012488.1"/>
</dbReference>
<dbReference type="SMR" id="C1L207"/>
<dbReference type="KEGG" id="lmc:Lm4b_01106"/>
<dbReference type="HOGENOM" id="CLU_059327_3_0_9"/>
<dbReference type="UniPathway" id="UPA00253">
    <property type="reaction ID" value="UER00333"/>
</dbReference>
<dbReference type="GO" id="GO:0005737">
    <property type="term" value="C:cytoplasm"/>
    <property type="evidence" value="ECO:0007669"/>
    <property type="project" value="InterPro"/>
</dbReference>
<dbReference type="GO" id="GO:0005524">
    <property type="term" value="F:ATP binding"/>
    <property type="evidence" value="ECO:0007669"/>
    <property type="project" value="UniProtKB-UniRule"/>
</dbReference>
<dbReference type="GO" id="GO:0004359">
    <property type="term" value="F:glutaminase activity"/>
    <property type="evidence" value="ECO:0007669"/>
    <property type="project" value="InterPro"/>
</dbReference>
<dbReference type="GO" id="GO:0046872">
    <property type="term" value="F:metal ion binding"/>
    <property type="evidence" value="ECO:0007669"/>
    <property type="project" value="UniProtKB-KW"/>
</dbReference>
<dbReference type="GO" id="GO:0003952">
    <property type="term" value="F:NAD+ synthase (glutamine-hydrolyzing) activity"/>
    <property type="evidence" value="ECO:0007669"/>
    <property type="project" value="InterPro"/>
</dbReference>
<dbReference type="GO" id="GO:0008795">
    <property type="term" value="F:NAD+ synthase activity"/>
    <property type="evidence" value="ECO:0007669"/>
    <property type="project" value="UniProtKB-UniRule"/>
</dbReference>
<dbReference type="GO" id="GO:0009435">
    <property type="term" value="P:NAD biosynthetic process"/>
    <property type="evidence" value="ECO:0007669"/>
    <property type="project" value="UniProtKB-UniRule"/>
</dbReference>
<dbReference type="CDD" id="cd00553">
    <property type="entry name" value="NAD_synthase"/>
    <property type="match status" value="1"/>
</dbReference>
<dbReference type="FunFam" id="3.40.50.620:FF:000015">
    <property type="entry name" value="NH(3)-dependent NAD(+) synthetase"/>
    <property type="match status" value="1"/>
</dbReference>
<dbReference type="Gene3D" id="3.40.50.620">
    <property type="entry name" value="HUPs"/>
    <property type="match status" value="1"/>
</dbReference>
<dbReference type="HAMAP" id="MF_00193">
    <property type="entry name" value="NadE_ammonia_dep"/>
    <property type="match status" value="1"/>
</dbReference>
<dbReference type="InterPro" id="IPR022310">
    <property type="entry name" value="NAD/GMP_synthase"/>
</dbReference>
<dbReference type="InterPro" id="IPR003694">
    <property type="entry name" value="NAD_synthase"/>
</dbReference>
<dbReference type="InterPro" id="IPR022926">
    <property type="entry name" value="NH(3)-dep_NAD(+)_synth"/>
</dbReference>
<dbReference type="InterPro" id="IPR014729">
    <property type="entry name" value="Rossmann-like_a/b/a_fold"/>
</dbReference>
<dbReference type="NCBIfam" id="TIGR00552">
    <property type="entry name" value="nadE"/>
    <property type="match status" value="1"/>
</dbReference>
<dbReference type="NCBIfam" id="NF001979">
    <property type="entry name" value="PRK00768.1"/>
    <property type="match status" value="1"/>
</dbReference>
<dbReference type="PANTHER" id="PTHR23090">
    <property type="entry name" value="NH 3 /GLUTAMINE-DEPENDENT NAD + SYNTHETASE"/>
    <property type="match status" value="1"/>
</dbReference>
<dbReference type="PANTHER" id="PTHR23090:SF7">
    <property type="entry name" value="NH(3)-DEPENDENT NAD(+) SYNTHETASE"/>
    <property type="match status" value="1"/>
</dbReference>
<dbReference type="Pfam" id="PF02540">
    <property type="entry name" value="NAD_synthase"/>
    <property type="match status" value="1"/>
</dbReference>
<dbReference type="SUPFAM" id="SSF52402">
    <property type="entry name" value="Adenine nucleotide alpha hydrolases-like"/>
    <property type="match status" value="1"/>
</dbReference>
<comment type="function">
    <text evidence="1">Catalyzes the ATP-dependent amidation of deamido-NAD to form NAD. Uses ammonia as a nitrogen source.</text>
</comment>
<comment type="catalytic activity">
    <reaction evidence="1">
        <text>deamido-NAD(+) + NH4(+) + ATP = AMP + diphosphate + NAD(+) + H(+)</text>
        <dbReference type="Rhea" id="RHEA:21188"/>
        <dbReference type="ChEBI" id="CHEBI:15378"/>
        <dbReference type="ChEBI" id="CHEBI:28938"/>
        <dbReference type="ChEBI" id="CHEBI:30616"/>
        <dbReference type="ChEBI" id="CHEBI:33019"/>
        <dbReference type="ChEBI" id="CHEBI:57540"/>
        <dbReference type="ChEBI" id="CHEBI:58437"/>
        <dbReference type="ChEBI" id="CHEBI:456215"/>
        <dbReference type="EC" id="6.3.1.5"/>
    </reaction>
</comment>
<comment type="pathway">
    <text evidence="1">Cofactor biosynthesis; NAD(+) biosynthesis; NAD(+) from deamido-NAD(+) (ammonia route): step 1/1.</text>
</comment>
<comment type="subunit">
    <text evidence="1">Homodimer.</text>
</comment>
<comment type="similarity">
    <text evidence="1">Belongs to the NAD synthetase family.</text>
</comment>
<accession>C1L207</accession>
<name>NADE_LISMC</name>
<gene>
    <name evidence="1" type="primary">nadE</name>
    <name type="ordered locus">Lm4b_01106</name>
</gene>
<evidence type="ECO:0000255" key="1">
    <source>
        <dbReference type="HAMAP-Rule" id="MF_00193"/>
    </source>
</evidence>
<proteinExistence type="inferred from homology"/>
<protein>
    <recommendedName>
        <fullName evidence="1">NH(3)-dependent NAD(+) synthetase</fullName>
        <ecNumber evidence="1">6.3.1.5</ecNumber>
    </recommendedName>
</protein>
<keyword id="KW-0067">ATP-binding</keyword>
<keyword id="KW-0436">Ligase</keyword>
<keyword id="KW-0460">Magnesium</keyword>
<keyword id="KW-0479">Metal-binding</keyword>
<keyword id="KW-0520">NAD</keyword>
<keyword id="KW-0547">Nucleotide-binding</keyword>
<organism>
    <name type="scientific">Listeria monocytogenes serotype 4b (strain CLIP80459)</name>
    <dbReference type="NCBI Taxonomy" id="568819"/>
    <lineage>
        <taxon>Bacteria</taxon>
        <taxon>Bacillati</taxon>
        <taxon>Bacillota</taxon>
        <taxon>Bacilli</taxon>
        <taxon>Bacillales</taxon>
        <taxon>Listeriaceae</taxon>
        <taxon>Listeria</taxon>
    </lineage>
</organism>
<reference key="1">
    <citation type="journal article" date="2012" name="BMC Genomics">
        <title>Comparative genomics and transcriptomics of lineages I, II, and III strains of Listeria monocytogenes.</title>
        <authorList>
            <person name="Hain T."/>
            <person name="Ghai R."/>
            <person name="Billion A."/>
            <person name="Kuenne C.T."/>
            <person name="Steinweg C."/>
            <person name="Izar B."/>
            <person name="Mohamed W."/>
            <person name="Mraheil M."/>
            <person name="Domann E."/>
            <person name="Schaffrath S."/>
            <person name="Karst U."/>
            <person name="Goesmann A."/>
            <person name="Oehm S."/>
            <person name="Puhler A."/>
            <person name="Merkl R."/>
            <person name="Vorwerk S."/>
            <person name="Glaser P."/>
            <person name="Garrido P."/>
            <person name="Rusniok C."/>
            <person name="Buchrieser C."/>
            <person name="Goebel W."/>
            <person name="Chakraborty T."/>
        </authorList>
    </citation>
    <scope>NUCLEOTIDE SEQUENCE [LARGE SCALE GENOMIC DNA]</scope>
    <source>
        <strain>CLIP80459</strain>
    </source>
</reference>
<sequence>MEIRERILADMQVAETIDAHEEIRKSVEFLKAYLKKNTFLKSFVLGISGGQDSTLTGKLAQMAISEMRAETGDDEYQFFAVSLPYGTQLDESDRQDALNFMEPDNRLTVNIKASVDASVAALAEAGVELSDFAKGNEKARERMKVQYAIAAMHKGVVVGTDHSAEAVTGFYTKYGDGGTDINPLFRLNKRQGKALLKELGCPEHLYLKKPTADLEDNKPALPDEVALGVTYDQIDDYLEGKEVPADAAAKIENWFIKTEHKRHMAITIFDDFWK</sequence>